<dbReference type="EMBL" id="AEOI02000008">
    <property type="protein sequence ID" value="ESW98330.1"/>
    <property type="molecule type" value="Genomic_DNA"/>
</dbReference>
<dbReference type="RefSeq" id="XP_013934213.1">
    <property type="nucleotide sequence ID" value="XM_014078738.1"/>
</dbReference>
<dbReference type="SMR" id="W1QCN1"/>
<dbReference type="STRING" id="871575.W1QCN1"/>
<dbReference type="GeneID" id="25773390"/>
<dbReference type="KEGG" id="opa:HPODL_03959"/>
<dbReference type="eggNOG" id="KOG4573">
    <property type="taxonomic scope" value="Eukaryota"/>
</dbReference>
<dbReference type="HOGENOM" id="CLU_448417_0_0_1"/>
<dbReference type="OMA" id="WNVCKGT"/>
<dbReference type="OrthoDB" id="70161at2759"/>
<dbReference type="Proteomes" id="UP000008673">
    <property type="component" value="Chromosome V"/>
</dbReference>
<dbReference type="GO" id="GO:1990316">
    <property type="term" value="C:Atg1/ULK1 kinase complex"/>
    <property type="evidence" value="ECO:0007669"/>
    <property type="project" value="InterPro"/>
</dbReference>
<dbReference type="GO" id="GO:0005829">
    <property type="term" value="C:cytosol"/>
    <property type="evidence" value="ECO:0007669"/>
    <property type="project" value="TreeGrafter"/>
</dbReference>
<dbReference type="GO" id="GO:0000407">
    <property type="term" value="C:phagophore assembly site"/>
    <property type="evidence" value="ECO:0007669"/>
    <property type="project" value="UniProtKB-SubCell"/>
</dbReference>
<dbReference type="GO" id="GO:0000423">
    <property type="term" value="P:mitophagy"/>
    <property type="evidence" value="ECO:0007669"/>
    <property type="project" value="TreeGrafter"/>
</dbReference>
<dbReference type="GO" id="GO:0034727">
    <property type="term" value="P:piecemeal microautophagy of the nucleus"/>
    <property type="evidence" value="ECO:0007669"/>
    <property type="project" value="TreeGrafter"/>
</dbReference>
<dbReference type="GO" id="GO:0034497">
    <property type="term" value="P:protein localization to phagophore assembly site"/>
    <property type="evidence" value="ECO:0007669"/>
    <property type="project" value="TreeGrafter"/>
</dbReference>
<dbReference type="GO" id="GO:0015031">
    <property type="term" value="P:protein transport"/>
    <property type="evidence" value="ECO:0007669"/>
    <property type="project" value="UniProtKB-KW"/>
</dbReference>
<dbReference type="Gene3D" id="6.10.140.1900">
    <property type="match status" value="1"/>
</dbReference>
<dbReference type="Gene3D" id="3.30.900.10">
    <property type="entry name" value="HORMA domain"/>
    <property type="match status" value="1"/>
</dbReference>
<dbReference type="InterPro" id="IPR040182">
    <property type="entry name" value="ATG13"/>
</dbReference>
<dbReference type="InterPro" id="IPR018731">
    <property type="entry name" value="Atg13_N"/>
</dbReference>
<dbReference type="InterPro" id="IPR036570">
    <property type="entry name" value="HORMA_dom_sf"/>
</dbReference>
<dbReference type="PANTHER" id="PTHR13430">
    <property type="match status" value="1"/>
</dbReference>
<dbReference type="PANTHER" id="PTHR13430:SF4">
    <property type="entry name" value="AUTOPHAGY-RELATED PROTEIN 13"/>
    <property type="match status" value="1"/>
</dbReference>
<dbReference type="Pfam" id="PF10033">
    <property type="entry name" value="ATG13"/>
    <property type="match status" value="1"/>
</dbReference>
<comment type="function">
    <text evidence="1">Activates the ATG1 kinase in a nutritional condition dependent manner through the TOR pathway, leading to autophagy (By similarity). Involved in ATG9 and ATG23 cycling through the pre-autophagosomal structure (By similarity). Also involved in cytoplasm to vacuole transport (Cvt) and more specifically in Cvt vesicle formation (By similarity). Seems to play a role in the switching machinery regulating the conversion between the Cvt pathway and autophagy (By similarity). Finally, ATG13 is also required for glycogen storage during stationary phase (By similarity).</text>
</comment>
<comment type="function">
    <text evidence="4">Acts as a negative regulator of xylose alcoholic fermentation, a role that is not related to autophagy (PubMed:29438555).</text>
</comment>
<comment type="subunit">
    <text evidence="1">Hypophosphorylated form interacts with ATG1 to form the ATG1-ATG13 kinase complex (By similarity). The ATG1-ATG13 complex interacts with the ATG17-ATG29-ATG31 complex through direct interaction with ATG17. Interacts with VAC8 (By similarity).</text>
</comment>
<comment type="subcellular location">
    <subcellularLocation>
        <location evidence="1">Cytoplasm</location>
    </subcellularLocation>
    <subcellularLocation>
        <location evidence="1">Preautophagosomal structure</location>
    </subcellularLocation>
</comment>
<comment type="disruption phenotype">
    <text evidence="4">Leads to derepression of several genes involved in xylose catabolism including PDC1, DAS1 and AOX1, and subsequent increased ethanol production from xylose (PubMed:29438555).</text>
</comment>
<comment type="similarity">
    <text evidence="6">Belongs to the ATG13 family. Fungi subfamily.</text>
</comment>
<keyword id="KW-0072">Autophagy</keyword>
<keyword id="KW-0963">Cytoplasm</keyword>
<keyword id="KW-0653">Protein transport</keyword>
<keyword id="KW-1185">Reference proteome</keyword>
<keyword id="KW-0813">Transport</keyword>
<feature type="chain" id="PRO_0000443909" description="Autophagy-related protein 13">
    <location>
        <begin position="1"/>
        <end position="700"/>
    </location>
</feature>
<feature type="region of interest" description="Disordered" evidence="3">
    <location>
        <begin position="319"/>
        <end position="352"/>
    </location>
</feature>
<feature type="region of interest" description="ATG17-binding" evidence="2">
    <location>
        <begin position="399"/>
        <end position="407"/>
    </location>
</feature>
<feature type="region of interest" description="ATG1-binding" evidence="2">
    <location>
        <begin position="428"/>
        <end position="487"/>
    </location>
</feature>
<feature type="region of interest" description="Disordered" evidence="3">
    <location>
        <begin position="506"/>
        <end position="562"/>
    </location>
</feature>
<feature type="region of interest" description="Disordered" evidence="3">
    <location>
        <begin position="576"/>
        <end position="637"/>
    </location>
</feature>
<feature type="region of interest" description="Disordered" evidence="3">
    <location>
        <begin position="649"/>
        <end position="700"/>
    </location>
</feature>
<feature type="compositionally biased region" description="Low complexity" evidence="3">
    <location>
        <begin position="332"/>
        <end position="344"/>
    </location>
</feature>
<feature type="compositionally biased region" description="Polar residues" evidence="3">
    <location>
        <begin position="506"/>
        <end position="532"/>
    </location>
</feature>
<feature type="compositionally biased region" description="Low complexity" evidence="3">
    <location>
        <begin position="595"/>
        <end position="631"/>
    </location>
</feature>
<feature type="compositionally biased region" description="Basic and acidic residues" evidence="3">
    <location>
        <begin position="656"/>
        <end position="667"/>
    </location>
</feature>
<gene>
    <name evidence="5" type="primary">ATG13</name>
    <name type="ORF">HPODL_03959</name>
</gene>
<protein>
    <recommendedName>
        <fullName evidence="5">Autophagy-related protein 13</fullName>
    </recommendedName>
</protein>
<reference key="1">
    <citation type="journal article" date="2013" name="BMC Genomics">
        <title>Genome sequence and analysis of methylotrophic yeast Hansenula polymorpha DL1.</title>
        <authorList>
            <person name="Ravin N.V."/>
            <person name="Eldarov M.A."/>
            <person name="Kadnikov V.V."/>
            <person name="Beletsky A.V."/>
            <person name="Schneider J."/>
            <person name="Mardanova E.S."/>
            <person name="Smekalova E.M."/>
            <person name="Zvereva M.I."/>
            <person name="Dontsova O.A."/>
            <person name="Mardanov A.V."/>
            <person name="Skryabin K.G."/>
        </authorList>
    </citation>
    <scope>NUCLEOTIDE SEQUENCE [LARGE SCALE GENOMIC DNA]</scope>
    <source>
        <strain>ATCC 26012 / BCRC 20466 / JCM 22074 / NRRL Y-7560 / DL-1</strain>
    </source>
</reference>
<reference key="2">
    <citation type="journal article" date="2018" name="FEMS Yeast Res.">
        <title>Autophagy-related gene ATG13 is involved in control of xylose alcoholic fermentation in the thermotolerant methylotrophic yeast Ogataea polymorpha.</title>
        <authorList>
            <person name="Dmytruk K.V."/>
            <person name="Ruchala J."/>
            <person name="Grabek-Lejko D."/>
            <person name="Puchalski C."/>
            <person name="Bulbotka N.V."/>
            <person name="Sibirny A.A."/>
        </authorList>
    </citation>
    <scope>FUNCTION</scope>
    <scope>DISRUPTION PHENOTYPE</scope>
</reference>
<sequence length="700" mass="77768">MSSVRRPSKLLSEKQSDKLAQIIQNFFLKAAHVIFHFRVAFPSVVLQPDDSYGAMGDSFAQSKYNNRWFNLDLGNYEIPRTELSLWRNKDILSLPPLVLETFLDLRGLSSNQTLMLDDVIVKTSKKSEIVLERWLIEFDLSTFDNEVMEFPSIYKKIIILFRSLYLLAGLLPSYKLRDKLVKSKSKNSAIHVSCRILDGSKPITSKGRIGLSKKLLSEDEHTSSKKLQPILTPIGALRVSVSYRTNCNFQVSDNEEALSSQFMLDHLPSVRTNYDSDGNSLTSPMDYLQNRVSSASIHLSDQSPRRRSSTRSVQLFKVGSINSSSSPPPGATQSNQSVSSFSTSKPIPVTLNKTNSSASLVPILRQNRDSLPKSIGSMVQNQMQETGHQVSSNSRRFSSSFGSRFRTVSSRNNSLDGQLVVANQPFSTPNNPILHNFRSRNKSPSVSSTELGPSSSIYMDDDLDSFMKMLDSKPDLRFPSNSPSVYEDPLANFKTFQKSNDFLTLEQQQHGSPSSNQIMIHSQSQTSQSQVFKRTVSSDRSRRGSVSSNYSPSSQALRPGVSAPMVTPSVTYGKFHASSGSPSNSSLAQYLRHNSSPPASATAVATVHNSLRRLTSSSQRTNTNSTNSSTRPVNPELLKLKSFNEDVFESDDDEHDEHSPRSTDTKSRNTGPSSGHAEDDEDDLLFAMSDMTLAKNNQEF</sequence>
<name>ATG13_OGAPD</name>
<organism>
    <name type="scientific">Ogataea parapolymorpha (strain ATCC 26012 / BCRC 20466 / JCM 22074 / NRRL Y-7560 / DL-1)</name>
    <name type="common">Yeast</name>
    <name type="synonym">Hansenula polymorpha</name>
    <dbReference type="NCBI Taxonomy" id="871575"/>
    <lineage>
        <taxon>Eukaryota</taxon>
        <taxon>Fungi</taxon>
        <taxon>Dikarya</taxon>
        <taxon>Ascomycota</taxon>
        <taxon>Saccharomycotina</taxon>
        <taxon>Pichiomycetes</taxon>
        <taxon>Pichiales</taxon>
        <taxon>Pichiaceae</taxon>
        <taxon>Ogataea</taxon>
    </lineage>
</organism>
<evidence type="ECO:0000250" key="1">
    <source>
        <dbReference type="UniProtKB" id="Q06628"/>
    </source>
</evidence>
<evidence type="ECO:0000250" key="2">
    <source>
        <dbReference type="UniProtKB" id="W0TA43"/>
    </source>
</evidence>
<evidence type="ECO:0000256" key="3">
    <source>
        <dbReference type="SAM" id="MobiDB-lite"/>
    </source>
</evidence>
<evidence type="ECO:0000269" key="4">
    <source>
    </source>
</evidence>
<evidence type="ECO:0000303" key="5">
    <source>
    </source>
</evidence>
<evidence type="ECO:0000305" key="6"/>
<accession>W1QCN1</accession>
<proteinExistence type="inferred from homology"/>